<accession>Q67473</accession>
<accession>Q6GZN5</accession>
<reference key="1">
    <citation type="journal article" date="1996" name="Virology">
        <title>Cloning, sequence analysis, and expression of the major capsid protein of the iridovirus frog virus 3.</title>
        <authorList>
            <person name="Mao J."/>
            <person name="Tham T.N."/>
            <person name="Gentry G.A."/>
            <person name="Aubertin A."/>
            <person name="Chinchar V.G."/>
        </authorList>
    </citation>
    <scope>NUCLEOTIDE SEQUENCE [GENOMIC DNA]</scope>
</reference>
<reference key="2">
    <citation type="journal article" date="2004" name="Virology">
        <title>Comparative genomic analyses of frog virus 3, type species of the genus Ranavirus (family Iridoviridae).</title>
        <authorList>
            <person name="Tan W.G."/>
            <person name="Barkman T.J."/>
            <person name="Gregory Chinchar V."/>
            <person name="Essani K."/>
        </authorList>
    </citation>
    <scope>NUCLEOTIDE SEQUENCE [LARGE SCALE GENOMIC DNA]</scope>
</reference>
<reference key="3">
    <citation type="journal article" date="1986" name="Virology">
        <title>Ultrastructural and biochemical evidence of the trimeric nature of frog virus 3 (FV3) six-coordinated capsomers.</title>
        <authorList>
            <person name="Darcy-Tripier F."/>
            <person name="Nermut M.V."/>
            <person name="Brown E."/>
            <person name="Nonnenmacher H."/>
            <person name="Braunwald J."/>
        </authorList>
    </citation>
    <scope>FUNCTION</scope>
</reference>
<sequence>MSSVTGSGITSGFIDLATYDNLERAMYGGSDATTYFVKEHYPVGWFTKLPSLAAKMSGNPAFGQQFSVGVPRSGDYILNAWLVLKTPEVELLAANQLGDNGTIRWTKNPMHNIVESVTLSFNDISAQSFNTAYLDAWSEYTMPEAKRTGYYNMIGNTSDLINPAPATGQDGARVLPAKNLVLPLPFFFSRDSGLALPVVSLPYNEIRITVKLRAIHDLLILQHNTTGAISPIVASDLAGGLPDTVEANVYMTVALITGDERQAMSSTVRDMVVEQVQAAPVHMVNPRNATTFHTDMRFSHAVKALMFMVQNVTHPSVGSNYTCVTPVVGVGNTVLEPALAVDPVKSASLVYENTTRLPDMGVEYYSLVEPWYYATSIPVSTGHHLYSYALSLQDPHPSGSTNYGRLTNASLNVTLSAEATTAAAGGGGNNSGYTTAQKYALIVLAINHNIIRIMNGSMGFPIL</sequence>
<organismHost>
    <name type="scientific">Dryophytes versicolor</name>
    <name type="common">chameleon treefrog</name>
    <dbReference type="NCBI Taxonomy" id="30343"/>
</organismHost>
<organismHost>
    <name type="scientific">Lithobates pipiens</name>
    <name type="common">Northern leopard frog</name>
    <name type="synonym">Rana pipiens</name>
    <dbReference type="NCBI Taxonomy" id="8404"/>
</organismHost>
<organismHost>
    <name type="scientific">Lithobates sylvaticus</name>
    <name type="common">Wood frog</name>
    <name type="synonym">Rana sylvatica</name>
    <dbReference type="NCBI Taxonomy" id="45438"/>
</organismHost>
<organismHost>
    <name type="scientific">Notophthalmus viridescens</name>
    <name type="common">Eastern newt</name>
    <name type="synonym">Triturus viridescens</name>
    <dbReference type="NCBI Taxonomy" id="8316"/>
</organismHost>
<keyword id="KW-0167">Capsid protein</keyword>
<keyword id="KW-0426">Late protein</keyword>
<keyword id="KW-1185">Reference proteome</keyword>
<keyword id="KW-0946">Virion</keyword>
<dbReference type="EMBL" id="U36913">
    <property type="protein sequence ID" value="AAB01722.1"/>
    <property type="molecule type" value="Genomic_DNA"/>
</dbReference>
<dbReference type="EMBL" id="AY548484">
    <property type="protein sequence ID" value="AAT09750.1"/>
    <property type="molecule type" value="Genomic_DNA"/>
</dbReference>
<dbReference type="RefSeq" id="YP_031669.1">
    <property type="nucleotide sequence ID" value="NC_005946.1"/>
</dbReference>
<dbReference type="SMR" id="Q67473"/>
<dbReference type="KEGG" id="vg:2947809"/>
<dbReference type="Proteomes" id="UP000008770">
    <property type="component" value="Segment"/>
</dbReference>
<dbReference type="GO" id="GO:0019028">
    <property type="term" value="C:viral capsid"/>
    <property type="evidence" value="ECO:0007669"/>
    <property type="project" value="UniProtKB-KW"/>
</dbReference>
<dbReference type="GO" id="GO:0005198">
    <property type="term" value="F:structural molecule activity"/>
    <property type="evidence" value="ECO:0007669"/>
    <property type="project" value="InterPro"/>
</dbReference>
<dbReference type="Gene3D" id="2.70.9.10">
    <property type="entry name" value="Adenovirus Type 2 Hexon, domain 4"/>
    <property type="match status" value="1"/>
</dbReference>
<dbReference type="Gene3D" id="2.70.9.20">
    <property type="entry name" value="Major capsid protein Vp54"/>
    <property type="match status" value="1"/>
</dbReference>
<dbReference type="InterPro" id="IPR031654">
    <property type="entry name" value="Capsid_N"/>
</dbReference>
<dbReference type="InterPro" id="IPR007542">
    <property type="entry name" value="MCP_C"/>
</dbReference>
<dbReference type="InterPro" id="IPR038519">
    <property type="entry name" value="MCP_C_sf"/>
</dbReference>
<dbReference type="InterPro" id="IPR016112">
    <property type="entry name" value="VP_dsDNA_II"/>
</dbReference>
<dbReference type="Pfam" id="PF16903">
    <property type="entry name" value="Capsid_N"/>
    <property type="match status" value="1"/>
</dbReference>
<dbReference type="Pfam" id="PF04451">
    <property type="entry name" value="Capsid_NCLDV"/>
    <property type="match status" value="1"/>
</dbReference>
<dbReference type="SUPFAM" id="SSF49749">
    <property type="entry name" value="Group II dsDNA viruses VP"/>
    <property type="match status" value="2"/>
</dbReference>
<evidence type="ECO:0000269" key="1">
    <source>
    </source>
</evidence>
<evidence type="ECO:0000305" key="2"/>
<gene>
    <name type="ORF">FV3-090R</name>
</gene>
<proteinExistence type="inferred from homology"/>
<organism>
    <name type="scientific">Frog virus 3 (isolate Goorha)</name>
    <name type="common">FV-3</name>
    <dbReference type="NCBI Taxonomy" id="654924"/>
    <lineage>
        <taxon>Viruses</taxon>
        <taxon>Varidnaviria</taxon>
        <taxon>Bamfordvirae</taxon>
        <taxon>Nucleocytoviricota</taxon>
        <taxon>Megaviricetes</taxon>
        <taxon>Pimascovirales</taxon>
        <taxon>Iridoviridae</taxon>
        <taxon>Alphairidovirinae</taxon>
        <taxon>Ranavirus</taxon>
        <taxon>Frog virus 3</taxon>
    </lineage>
</organism>
<feature type="chain" id="PRO_0000222379" description="Major capsid protein">
    <location>
        <begin position="1"/>
        <end position="463"/>
    </location>
</feature>
<name>MCP_FRG3G</name>
<protein>
    <recommendedName>
        <fullName>Major capsid protein</fullName>
        <shortName>MCP</shortName>
    </recommendedName>
    <alternativeName>
        <fullName>P50</fullName>
    </alternativeName>
</protein>
<comment type="function">
    <text evidence="1">Major capsid protein that self assembles to form a T=133 or T=147 icosahedral capsid.</text>
</comment>
<comment type="subunit">
    <text>Homomultimer.</text>
</comment>
<comment type="subcellular location">
    <subcellularLocation>
        <location evidence="2">Virion</location>
    </subcellularLocation>
</comment>
<comment type="similarity">
    <text evidence="2">Belongs to the NCLDV major capsid protein family.</text>
</comment>